<dbReference type="EC" id="3.5.4.16" evidence="1"/>
<dbReference type="EMBL" id="CP001124">
    <property type="protein sequence ID" value="ACH40684.1"/>
    <property type="molecule type" value="Genomic_DNA"/>
</dbReference>
<dbReference type="RefSeq" id="WP_012532122.1">
    <property type="nucleotide sequence ID" value="NC_011146.1"/>
</dbReference>
<dbReference type="SMR" id="B5EDQ6"/>
<dbReference type="STRING" id="404380.Gbem_3692"/>
<dbReference type="KEGG" id="gbm:Gbem_3692"/>
<dbReference type="eggNOG" id="COG1469">
    <property type="taxonomic scope" value="Bacteria"/>
</dbReference>
<dbReference type="HOGENOM" id="CLU_062816_1_1_7"/>
<dbReference type="UniPathway" id="UPA00848">
    <property type="reaction ID" value="UER00151"/>
</dbReference>
<dbReference type="Proteomes" id="UP000008825">
    <property type="component" value="Chromosome"/>
</dbReference>
<dbReference type="GO" id="GO:0003934">
    <property type="term" value="F:GTP cyclohydrolase I activity"/>
    <property type="evidence" value="ECO:0007669"/>
    <property type="project" value="UniProtKB-UniRule"/>
</dbReference>
<dbReference type="GO" id="GO:0046654">
    <property type="term" value="P:tetrahydrofolate biosynthetic process"/>
    <property type="evidence" value="ECO:0007669"/>
    <property type="project" value="UniProtKB-UniRule"/>
</dbReference>
<dbReference type="Gene3D" id="3.10.270.10">
    <property type="entry name" value="Urate Oxidase"/>
    <property type="match status" value="1"/>
</dbReference>
<dbReference type="HAMAP" id="MF_01527_B">
    <property type="entry name" value="GTP_cyclohydrol_B"/>
    <property type="match status" value="1"/>
</dbReference>
<dbReference type="InterPro" id="IPR022838">
    <property type="entry name" value="GTP_cyclohydrolase_FolE2"/>
</dbReference>
<dbReference type="InterPro" id="IPR003801">
    <property type="entry name" value="GTP_cyclohydrolase_FolE2/MptA"/>
</dbReference>
<dbReference type="NCBIfam" id="NF010200">
    <property type="entry name" value="PRK13674.1-1"/>
    <property type="match status" value="1"/>
</dbReference>
<dbReference type="PANTHER" id="PTHR36445">
    <property type="entry name" value="GTP CYCLOHYDROLASE MPTA"/>
    <property type="match status" value="1"/>
</dbReference>
<dbReference type="PANTHER" id="PTHR36445:SF1">
    <property type="entry name" value="GTP CYCLOHYDROLASE MPTA"/>
    <property type="match status" value="1"/>
</dbReference>
<dbReference type="Pfam" id="PF02649">
    <property type="entry name" value="GCHY-1"/>
    <property type="match status" value="1"/>
</dbReference>
<evidence type="ECO:0000255" key="1">
    <source>
        <dbReference type="HAMAP-Rule" id="MF_01527"/>
    </source>
</evidence>
<proteinExistence type="inferred from homology"/>
<accession>B5EDQ6</accession>
<comment type="function">
    <text evidence="1">Converts GTP to 7,8-dihydroneopterin triphosphate.</text>
</comment>
<comment type="catalytic activity">
    <reaction evidence="1">
        <text>GTP + H2O = 7,8-dihydroneopterin 3'-triphosphate + formate + H(+)</text>
        <dbReference type="Rhea" id="RHEA:17473"/>
        <dbReference type="ChEBI" id="CHEBI:15377"/>
        <dbReference type="ChEBI" id="CHEBI:15378"/>
        <dbReference type="ChEBI" id="CHEBI:15740"/>
        <dbReference type="ChEBI" id="CHEBI:37565"/>
        <dbReference type="ChEBI" id="CHEBI:58462"/>
        <dbReference type="EC" id="3.5.4.16"/>
    </reaction>
</comment>
<comment type="pathway">
    <text evidence="1">Cofactor biosynthesis; 7,8-dihydroneopterin triphosphate biosynthesis; 7,8-dihydroneopterin triphosphate from GTP: step 1/1.</text>
</comment>
<comment type="similarity">
    <text evidence="1">Belongs to the GTP cyclohydrolase IV family.</text>
</comment>
<sequence length="267" mass="30890">MIKEYLKKPSLSDVQLTRDTRNIPIGKVGVKDISYPIVVMDKNKSFQNTIARINMYVDLPHHFKGTHMSRFVEILNEYREEIALDKLELILSTMKEKLGASNAHLEMEFPYFVEKTAPVSRAKSLMEYTCTFSASLSDRFDFVLGIKVPVTSLCPCSKELSSYGAHNQRSIMTVQVRYSEFIWIEDLIEIIEQCGSSPVYSLLKREDEKFVTERAYENPRFVEDMVREATVRLLSMQNVTWFSVEAENFESIHKHSAYAAIERSRES</sequence>
<protein>
    <recommendedName>
        <fullName evidence="1">GTP cyclohydrolase FolE2</fullName>
        <ecNumber evidence="1">3.5.4.16</ecNumber>
    </recommendedName>
</protein>
<reference key="1">
    <citation type="submission" date="2008-07" db="EMBL/GenBank/DDBJ databases">
        <title>Complete sequence of Geobacter bemidjiensis BEM.</title>
        <authorList>
            <consortium name="US DOE Joint Genome Institute"/>
            <person name="Lucas S."/>
            <person name="Copeland A."/>
            <person name="Lapidus A."/>
            <person name="Glavina del Rio T."/>
            <person name="Dalin E."/>
            <person name="Tice H."/>
            <person name="Bruce D."/>
            <person name="Goodwin L."/>
            <person name="Pitluck S."/>
            <person name="Kiss H."/>
            <person name="Brettin T."/>
            <person name="Detter J.C."/>
            <person name="Han C."/>
            <person name="Kuske C.R."/>
            <person name="Schmutz J."/>
            <person name="Larimer F."/>
            <person name="Land M."/>
            <person name="Hauser L."/>
            <person name="Kyrpides N."/>
            <person name="Lykidis A."/>
            <person name="Lovley D."/>
            <person name="Richardson P."/>
        </authorList>
    </citation>
    <scope>NUCLEOTIDE SEQUENCE [LARGE SCALE GENOMIC DNA]</scope>
    <source>
        <strain>ATCC BAA-1014 / DSM 16622 / JCM 12645 / Bem</strain>
    </source>
</reference>
<keyword id="KW-0378">Hydrolase</keyword>
<keyword id="KW-1185">Reference proteome</keyword>
<name>GCH4_CITBB</name>
<feature type="chain" id="PRO_1000185153" description="GTP cyclohydrolase FolE2">
    <location>
        <begin position="1"/>
        <end position="267"/>
    </location>
</feature>
<feature type="site" description="May be catalytically important" evidence="1">
    <location>
        <position position="154"/>
    </location>
</feature>
<gene>
    <name evidence="1" type="primary">folE2</name>
    <name type="ordered locus">Gbem_3692</name>
</gene>
<organism>
    <name type="scientific">Citrifermentans bemidjiense (strain ATCC BAA-1014 / DSM 16622 / JCM 12645 / Bem)</name>
    <name type="common">Geobacter bemidjiensis</name>
    <dbReference type="NCBI Taxonomy" id="404380"/>
    <lineage>
        <taxon>Bacteria</taxon>
        <taxon>Pseudomonadati</taxon>
        <taxon>Thermodesulfobacteriota</taxon>
        <taxon>Desulfuromonadia</taxon>
        <taxon>Geobacterales</taxon>
        <taxon>Geobacteraceae</taxon>
        <taxon>Citrifermentans</taxon>
    </lineage>
</organism>